<sequence>MSSSLPLRDDGALRGSLMLAVFTLFGLGLAYSLVATGITGALFSEQATGSLVRVDARVVGSALVAQPFTDARYFQPRPSAAKYDLTAASGSNQARSNPDLLARIAATRAQVAKRDGIAPEAVPGELLTQSGSGLDPHLSPAGAQVQIRRVAAARGLPEQRVAALVQAATEAPQFGLLGQPRVNVLALNLALDKAGNGESGRDNGVKQAY</sequence>
<protein>
    <recommendedName>
        <fullName evidence="1">Potassium-transporting ATPase KdpC subunit</fullName>
    </recommendedName>
    <alternativeName>
        <fullName evidence="1">ATP phosphohydrolase [potassium-transporting] C chain</fullName>
    </alternativeName>
    <alternativeName>
        <fullName evidence="1">Potassium-binding and translocating subunit C</fullName>
    </alternativeName>
    <alternativeName>
        <fullName evidence="1">Potassium-translocating ATPase C chain</fullName>
    </alternativeName>
</protein>
<comment type="function">
    <text evidence="1">Part of the high-affinity ATP-driven potassium transport (or Kdp) system, which catalyzes the hydrolysis of ATP coupled with the electrogenic transport of potassium into the cytoplasm. This subunit acts as a catalytic chaperone that increases the ATP-binding affinity of the ATP-hydrolyzing subunit KdpB by the formation of a transient KdpB/KdpC/ATP ternary complex.</text>
</comment>
<comment type="subunit">
    <text evidence="1">The system is composed of three essential subunits: KdpA, KdpB and KdpC.</text>
</comment>
<comment type="subcellular location">
    <subcellularLocation>
        <location evidence="1">Cell inner membrane</location>
        <topology evidence="1">Single-pass membrane protein</topology>
    </subcellularLocation>
</comment>
<comment type="similarity">
    <text evidence="1">Belongs to the KdpC family.</text>
</comment>
<gene>
    <name evidence="1" type="primary">kdpC</name>
    <name type="ordered locus">XOO3622</name>
</gene>
<feature type="chain" id="PRO_1000022324" description="Potassium-transporting ATPase KdpC subunit">
    <location>
        <begin position="1"/>
        <end position="209"/>
    </location>
</feature>
<feature type="transmembrane region" description="Helical" evidence="1">
    <location>
        <begin position="18"/>
        <end position="38"/>
    </location>
</feature>
<accession>Q2NZA0</accession>
<name>KDPC_XANOM</name>
<evidence type="ECO:0000255" key="1">
    <source>
        <dbReference type="HAMAP-Rule" id="MF_00276"/>
    </source>
</evidence>
<dbReference type="EMBL" id="AP008229">
    <property type="protein sequence ID" value="BAE70377.1"/>
    <property type="molecule type" value="Genomic_DNA"/>
</dbReference>
<dbReference type="RefSeq" id="WP_011409390.1">
    <property type="nucleotide sequence ID" value="NC_007705.1"/>
</dbReference>
<dbReference type="SMR" id="Q2NZA0"/>
<dbReference type="KEGG" id="xom:XOO3622"/>
<dbReference type="HOGENOM" id="CLU_077094_2_0_6"/>
<dbReference type="GO" id="GO:0005886">
    <property type="term" value="C:plasma membrane"/>
    <property type="evidence" value="ECO:0007669"/>
    <property type="project" value="UniProtKB-SubCell"/>
</dbReference>
<dbReference type="GO" id="GO:0005524">
    <property type="term" value="F:ATP binding"/>
    <property type="evidence" value="ECO:0007669"/>
    <property type="project" value="UniProtKB-UniRule"/>
</dbReference>
<dbReference type="GO" id="GO:0008556">
    <property type="term" value="F:P-type potassium transmembrane transporter activity"/>
    <property type="evidence" value="ECO:0007669"/>
    <property type="project" value="InterPro"/>
</dbReference>
<dbReference type="HAMAP" id="MF_00276">
    <property type="entry name" value="KdpC"/>
    <property type="match status" value="1"/>
</dbReference>
<dbReference type="InterPro" id="IPR003820">
    <property type="entry name" value="KdpC"/>
</dbReference>
<dbReference type="NCBIfam" id="TIGR00681">
    <property type="entry name" value="kdpC"/>
    <property type="match status" value="1"/>
</dbReference>
<dbReference type="NCBIfam" id="NF001454">
    <property type="entry name" value="PRK00315.1"/>
    <property type="match status" value="1"/>
</dbReference>
<dbReference type="PANTHER" id="PTHR30042">
    <property type="entry name" value="POTASSIUM-TRANSPORTING ATPASE C CHAIN"/>
    <property type="match status" value="1"/>
</dbReference>
<dbReference type="PANTHER" id="PTHR30042:SF2">
    <property type="entry name" value="POTASSIUM-TRANSPORTING ATPASE KDPC SUBUNIT"/>
    <property type="match status" value="1"/>
</dbReference>
<dbReference type="Pfam" id="PF02669">
    <property type="entry name" value="KdpC"/>
    <property type="match status" value="1"/>
</dbReference>
<dbReference type="PIRSF" id="PIRSF001296">
    <property type="entry name" value="K_ATPase_KdpC"/>
    <property type="match status" value="1"/>
</dbReference>
<reference key="1">
    <citation type="journal article" date="2005" name="Jpn. Agric. Res. Q.">
        <title>Genome sequence of Xanthomonas oryzae pv. oryzae suggests contribution of large numbers of effector genes and insertion sequences to its race diversity.</title>
        <authorList>
            <person name="Ochiai H."/>
            <person name="Inoue Y."/>
            <person name="Takeya M."/>
            <person name="Sasaki A."/>
            <person name="Kaku H."/>
        </authorList>
    </citation>
    <scope>NUCLEOTIDE SEQUENCE [LARGE SCALE GENOMIC DNA]</scope>
    <source>
        <strain>MAFF 311018</strain>
    </source>
</reference>
<proteinExistence type="inferred from homology"/>
<keyword id="KW-0067">ATP-binding</keyword>
<keyword id="KW-0997">Cell inner membrane</keyword>
<keyword id="KW-1003">Cell membrane</keyword>
<keyword id="KW-0406">Ion transport</keyword>
<keyword id="KW-0472">Membrane</keyword>
<keyword id="KW-0547">Nucleotide-binding</keyword>
<keyword id="KW-0630">Potassium</keyword>
<keyword id="KW-0633">Potassium transport</keyword>
<keyword id="KW-0812">Transmembrane</keyword>
<keyword id="KW-1133">Transmembrane helix</keyword>
<keyword id="KW-0813">Transport</keyword>
<organism>
    <name type="scientific">Xanthomonas oryzae pv. oryzae (strain MAFF 311018)</name>
    <dbReference type="NCBI Taxonomy" id="342109"/>
    <lineage>
        <taxon>Bacteria</taxon>
        <taxon>Pseudomonadati</taxon>
        <taxon>Pseudomonadota</taxon>
        <taxon>Gammaproteobacteria</taxon>
        <taxon>Lysobacterales</taxon>
        <taxon>Lysobacteraceae</taxon>
        <taxon>Xanthomonas</taxon>
    </lineage>
</organism>